<gene>
    <name evidence="1" type="primary">rpsQ</name>
    <name type="ordered locus">CLH_0246</name>
</gene>
<sequence length="84" mass="9946">MERTLRKKRTGRVVSDKMDKTVVVAVETKVRHPLYGKTINKTTKFKVHDEKNEAKINDRVLIMETRPLSKDKRWRLVEIVEKAK</sequence>
<protein>
    <recommendedName>
        <fullName evidence="1">Small ribosomal subunit protein uS17</fullName>
    </recommendedName>
    <alternativeName>
        <fullName evidence="2">30S ribosomal protein S17</fullName>
    </alternativeName>
</protein>
<comment type="function">
    <text evidence="1">One of the primary rRNA binding proteins, it binds specifically to the 5'-end of 16S ribosomal RNA.</text>
</comment>
<comment type="subunit">
    <text evidence="1">Part of the 30S ribosomal subunit.</text>
</comment>
<comment type="similarity">
    <text evidence="1">Belongs to the universal ribosomal protein uS17 family.</text>
</comment>
<accession>B2UYB9</accession>
<name>RS17_CLOBA</name>
<proteinExistence type="inferred from homology"/>
<organism>
    <name type="scientific">Clostridium botulinum (strain Alaska E43 / Type E3)</name>
    <dbReference type="NCBI Taxonomy" id="508767"/>
    <lineage>
        <taxon>Bacteria</taxon>
        <taxon>Bacillati</taxon>
        <taxon>Bacillota</taxon>
        <taxon>Clostridia</taxon>
        <taxon>Eubacteriales</taxon>
        <taxon>Clostridiaceae</taxon>
        <taxon>Clostridium</taxon>
    </lineage>
</organism>
<evidence type="ECO:0000255" key="1">
    <source>
        <dbReference type="HAMAP-Rule" id="MF_01345"/>
    </source>
</evidence>
<evidence type="ECO:0000305" key="2"/>
<feature type="chain" id="PRO_1000143240" description="Small ribosomal subunit protein uS17">
    <location>
        <begin position="1"/>
        <end position="84"/>
    </location>
</feature>
<dbReference type="EMBL" id="CP001078">
    <property type="protein sequence ID" value="ACD53502.1"/>
    <property type="molecule type" value="Genomic_DNA"/>
</dbReference>
<dbReference type="RefSeq" id="WP_003369916.1">
    <property type="nucleotide sequence ID" value="NC_010723.1"/>
</dbReference>
<dbReference type="SMR" id="B2UYB9"/>
<dbReference type="KEGG" id="cbt:CLH_0246"/>
<dbReference type="HOGENOM" id="CLU_073626_1_0_9"/>
<dbReference type="GO" id="GO:0022627">
    <property type="term" value="C:cytosolic small ribosomal subunit"/>
    <property type="evidence" value="ECO:0007669"/>
    <property type="project" value="TreeGrafter"/>
</dbReference>
<dbReference type="GO" id="GO:0019843">
    <property type="term" value="F:rRNA binding"/>
    <property type="evidence" value="ECO:0007669"/>
    <property type="project" value="UniProtKB-UniRule"/>
</dbReference>
<dbReference type="GO" id="GO:0003735">
    <property type="term" value="F:structural constituent of ribosome"/>
    <property type="evidence" value="ECO:0007669"/>
    <property type="project" value="InterPro"/>
</dbReference>
<dbReference type="GO" id="GO:0006412">
    <property type="term" value="P:translation"/>
    <property type="evidence" value="ECO:0007669"/>
    <property type="project" value="UniProtKB-UniRule"/>
</dbReference>
<dbReference type="CDD" id="cd00364">
    <property type="entry name" value="Ribosomal_uS17"/>
    <property type="match status" value="1"/>
</dbReference>
<dbReference type="FunFam" id="2.40.50.140:FF:000123">
    <property type="entry name" value="30S ribosomal protein S17"/>
    <property type="match status" value="1"/>
</dbReference>
<dbReference type="Gene3D" id="2.40.50.140">
    <property type="entry name" value="Nucleic acid-binding proteins"/>
    <property type="match status" value="1"/>
</dbReference>
<dbReference type="HAMAP" id="MF_01345_B">
    <property type="entry name" value="Ribosomal_uS17_B"/>
    <property type="match status" value="1"/>
</dbReference>
<dbReference type="InterPro" id="IPR012340">
    <property type="entry name" value="NA-bd_OB-fold"/>
</dbReference>
<dbReference type="InterPro" id="IPR000266">
    <property type="entry name" value="Ribosomal_uS17"/>
</dbReference>
<dbReference type="InterPro" id="IPR019984">
    <property type="entry name" value="Ribosomal_uS17_bact/chlr"/>
</dbReference>
<dbReference type="NCBIfam" id="NF004123">
    <property type="entry name" value="PRK05610.1"/>
    <property type="match status" value="1"/>
</dbReference>
<dbReference type="NCBIfam" id="TIGR03635">
    <property type="entry name" value="uS17_bact"/>
    <property type="match status" value="1"/>
</dbReference>
<dbReference type="PANTHER" id="PTHR10744">
    <property type="entry name" value="40S RIBOSOMAL PROTEIN S11 FAMILY MEMBER"/>
    <property type="match status" value="1"/>
</dbReference>
<dbReference type="PANTHER" id="PTHR10744:SF1">
    <property type="entry name" value="SMALL RIBOSOMAL SUBUNIT PROTEIN US17M"/>
    <property type="match status" value="1"/>
</dbReference>
<dbReference type="Pfam" id="PF00366">
    <property type="entry name" value="Ribosomal_S17"/>
    <property type="match status" value="1"/>
</dbReference>
<dbReference type="PRINTS" id="PR00973">
    <property type="entry name" value="RIBOSOMALS17"/>
</dbReference>
<dbReference type="SUPFAM" id="SSF50249">
    <property type="entry name" value="Nucleic acid-binding proteins"/>
    <property type="match status" value="1"/>
</dbReference>
<reference key="1">
    <citation type="submission" date="2008-05" db="EMBL/GenBank/DDBJ databases">
        <title>Complete genome sequence of Clostridium botulinum E3 str. Alaska E43.</title>
        <authorList>
            <person name="Brinkac L.M."/>
            <person name="Brown J.L."/>
            <person name="Bruce D."/>
            <person name="Detter C."/>
            <person name="Munk C."/>
            <person name="Smith L.A."/>
            <person name="Smith T.J."/>
            <person name="Sutton G."/>
            <person name="Brettin T.S."/>
        </authorList>
    </citation>
    <scope>NUCLEOTIDE SEQUENCE [LARGE SCALE GENOMIC DNA]</scope>
    <source>
        <strain>Alaska E43 / Type E3</strain>
    </source>
</reference>
<keyword id="KW-0687">Ribonucleoprotein</keyword>
<keyword id="KW-0689">Ribosomal protein</keyword>
<keyword id="KW-0694">RNA-binding</keyword>
<keyword id="KW-0699">rRNA-binding</keyword>